<protein>
    <recommendedName>
        <fullName evidence="12">Sodium channel protein type 4 subunit alpha</fullName>
    </recommendedName>
    <alternativeName>
        <fullName>Sodium channel protein skeletal muscle subunit alpha</fullName>
    </alternativeName>
    <alternativeName>
        <fullName>Sodium channel protein type IV subunit alpha</fullName>
    </alternativeName>
    <alternativeName>
        <fullName evidence="13">Voltage-gated sodium channel subunit alpha Nav1.4</fullName>
    </alternativeName>
</protein>
<feature type="chain" id="PRO_0000371316" description="Sodium channel protein type 4 subunit alpha">
    <location>
        <begin position="1"/>
        <end position="1841"/>
    </location>
</feature>
<feature type="topological domain" description="Cytoplasmic" evidence="12">
    <location>
        <begin position="1"/>
        <end position="131"/>
    </location>
</feature>
<feature type="transmembrane region" description="Helical; Name=S1 of repeat I" evidence="2">
    <location>
        <begin position="132"/>
        <end position="150"/>
    </location>
</feature>
<feature type="topological domain" description="Extracellular" evidence="12">
    <location>
        <begin position="151"/>
        <end position="157"/>
    </location>
</feature>
<feature type="transmembrane region" description="Helical; Name=S2 of repeat I" evidence="2">
    <location>
        <begin position="158"/>
        <end position="178"/>
    </location>
</feature>
<feature type="topological domain" description="Cytoplasmic" evidence="12">
    <location>
        <begin position="179"/>
        <end position="192"/>
    </location>
</feature>
<feature type="transmembrane region" description="Helical; Name=S3 of repeat I" evidence="2">
    <location>
        <begin position="193"/>
        <end position="210"/>
    </location>
</feature>
<feature type="topological domain" description="Extracellular" evidence="12">
    <location>
        <begin position="211"/>
        <end position="216"/>
    </location>
</feature>
<feature type="transmembrane region" description="Helical; Name=S4 of repeat I" evidence="2">
    <location>
        <begin position="217"/>
        <end position="233"/>
    </location>
</feature>
<feature type="topological domain" description="Cytoplasmic" evidence="12">
    <location>
        <begin position="234"/>
        <end position="252"/>
    </location>
</feature>
<feature type="transmembrane region" description="Helical; Name=S5 of repeat I" evidence="2">
    <location>
        <begin position="253"/>
        <end position="272"/>
    </location>
</feature>
<feature type="topological domain" description="Extracellular" evidence="12">
    <location>
        <begin position="273"/>
        <end position="385"/>
    </location>
</feature>
<feature type="intramembrane region" description="Pore-forming" evidence="2">
    <location>
        <begin position="386"/>
        <end position="410"/>
    </location>
</feature>
<feature type="topological domain" description="Extracellular" evidence="12">
    <location>
        <begin position="411"/>
        <end position="417"/>
    </location>
</feature>
<feature type="transmembrane region" description="Helical; Name=S6 of repeat I" evidence="2">
    <location>
        <begin position="418"/>
        <end position="438"/>
    </location>
</feature>
<feature type="topological domain" description="Cytoplasmic" evidence="12">
    <location>
        <begin position="439"/>
        <end position="572"/>
    </location>
</feature>
<feature type="transmembrane region" description="Helical; Name=S1 of repeat II" evidence="2">
    <location>
        <begin position="573"/>
        <end position="591"/>
    </location>
</feature>
<feature type="topological domain" description="Extracellular" evidence="12">
    <location>
        <begin position="592"/>
        <end position="602"/>
    </location>
</feature>
<feature type="transmembrane region" description="Helical; Name=S2 of repeat II" evidence="2">
    <location>
        <begin position="603"/>
        <end position="622"/>
    </location>
</feature>
<feature type="topological domain" description="Cytoplasmic" evidence="12">
    <location>
        <begin position="623"/>
        <end position="636"/>
    </location>
</feature>
<feature type="transmembrane region" description="Helical; Name=S3 of repeat II" evidence="2">
    <location>
        <begin position="637"/>
        <end position="656"/>
    </location>
</feature>
<feature type="topological domain" description="Extracellular" evidence="12">
    <location>
        <begin position="657"/>
        <end position="658"/>
    </location>
</feature>
<feature type="transmembrane region" description="Helical; Name=S4 of repeat II" evidence="2">
    <location>
        <begin position="659"/>
        <end position="676"/>
    </location>
</feature>
<feature type="topological domain" description="Cytoplasmic" evidence="12">
    <location>
        <begin position="677"/>
        <end position="692"/>
    </location>
</feature>
<feature type="transmembrane region" description="Helical; Name=S5 of repeat II" evidence="2">
    <location>
        <begin position="693"/>
        <end position="711"/>
    </location>
</feature>
<feature type="topological domain" description="Extracellular" evidence="12">
    <location>
        <begin position="712"/>
        <end position="740"/>
    </location>
</feature>
<feature type="intramembrane region" description="Pore-forming" evidence="2">
    <location>
        <begin position="741"/>
        <end position="761"/>
    </location>
</feature>
<feature type="topological domain" description="Extracellular" evidence="12">
    <location>
        <begin position="762"/>
        <end position="772"/>
    </location>
</feature>
<feature type="transmembrane region" description="Helical; Name=S6 of repeat II" evidence="2">
    <location>
        <begin position="773"/>
        <end position="791"/>
    </location>
</feature>
<feature type="topological domain" description="Cytoplasmic" evidence="12">
    <location>
        <begin position="792"/>
        <end position="1026"/>
    </location>
</feature>
<feature type="transmembrane region" description="Helical; Name=S1 of repeat III" evidence="2">
    <location>
        <begin position="1027"/>
        <end position="1044"/>
    </location>
</feature>
<feature type="topological domain" description="Extracellular" evidence="12">
    <location>
        <begin position="1045"/>
        <end position="1057"/>
    </location>
</feature>
<feature type="transmembrane region" description="Helical; Name=S2 of repeat III" evidence="2">
    <location>
        <begin position="1058"/>
        <end position="1076"/>
    </location>
</feature>
<feature type="topological domain" description="Cytoplasmic" evidence="12">
    <location>
        <begin position="1077"/>
        <end position="1090"/>
    </location>
</feature>
<feature type="transmembrane region" description="Helical; Name=S3 of repeat III" evidence="2">
    <location>
        <begin position="1091"/>
        <end position="1109"/>
    </location>
</feature>
<feature type="topological domain" description="Extracellular" evidence="12">
    <location>
        <begin position="1110"/>
        <end position="1117"/>
    </location>
</feature>
<feature type="transmembrane region" description="Helical; Name=S4 of repeat III" evidence="2">
    <location>
        <begin position="1118"/>
        <end position="1136"/>
    </location>
</feature>
<feature type="topological domain" description="Cytoplasmic" evidence="12">
    <location>
        <begin position="1137"/>
        <end position="1153"/>
    </location>
</feature>
<feature type="transmembrane region" description="Helical; Name=S5 of repeat III" evidence="2">
    <location>
        <begin position="1154"/>
        <end position="1173"/>
    </location>
</feature>
<feature type="topological domain" description="Extracellular" evidence="12">
    <location>
        <begin position="1174"/>
        <end position="1224"/>
    </location>
</feature>
<feature type="intramembrane region" description="Pore-forming" evidence="2">
    <location>
        <begin position="1225"/>
        <end position="1246"/>
    </location>
</feature>
<feature type="topological domain" description="Extracellular" evidence="12">
    <location>
        <begin position="1247"/>
        <end position="1263"/>
    </location>
</feature>
<feature type="transmembrane region" description="Helical; Name=S6 of repeat III" evidence="2">
    <location>
        <begin position="1264"/>
        <end position="1285"/>
    </location>
</feature>
<feature type="topological domain" description="Cytoplasmic" evidence="12">
    <location>
        <begin position="1286"/>
        <end position="1348"/>
    </location>
</feature>
<feature type="transmembrane region" description="Helical; Name=S1 of repeat IV" evidence="2">
    <location>
        <begin position="1349"/>
        <end position="1366"/>
    </location>
</feature>
<feature type="topological domain" description="Extracellular" evidence="12">
    <location>
        <begin position="1367"/>
        <end position="1377"/>
    </location>
</feature>
<feature type="transmembrane region" description="Helical; Name=S2 of repeat IV" evidence="2">
    <location>
        <begin position="1378"/>
        <end position="1396"/>
    </location>
</feature>
<feature type="topological domain" description="Cytoplasmic" evidence="12">
    <location>
        <begin position="1397"/>
        <end position="1408"/>
    </location>
</feature>
<feature type="transmembrane region" description="Helical; Name=S3 of repeat IV" evidence="2">
    <location>
        <begin position="1409"/>
        <end position="1426"/>
    </location>
</feature>
<feature type="topological domain" description="Extracellular" evidence="12">
    <location>
        <begin position="1427"/>
        <end position="1439"/>
    </location>
</feature>
<feature type="transmembrane region" description="Helical; Name=S4 of repeat IV" evidence="2">
    <location>
        <begin position="1440"/>
        <end position="1456"/>
    </location>
</feature>
<feature type="topological domain" description="Cytoplasmic" evidence="12">
    <location>
        <begin position="1457"/>
        <end position="1475"/>
    </location>
</feature>
<feature type="transmembrane region" description="Helical; Name=S5 of repeat IV" evidence="2">
    <location>
        <begin position="1476"/>
        <end position="1493"/>
    </location>
</feature>
<feature type="topological domain" description="Extracellular" evidence="12">
    <location>
        <begin position="1494"/>
        <end position="1515"/>
    </location>
</feature>
<feature type="intramembrane region" description="Pore-forming" evidence="2">
    <location>
        <begin position="1516"/>
        <end position="1538"/>
    </location>
</feature>
<feature type="topological domain" description="Extracellular" evidence="12">
    <location>
        <begin position="1539"/>
        <end position="1568"/>
    </location>
</feature>
<feature type="transmembrane region" description="Helical; Name=S6 of repeat IV" evidence="2">
    <location>
        <begin position="1569"/>
        <end position="1591"/>
    </location>
</feature>
<feature type="topological domain" description="Cytoplasmic" evidence="12">
    <location>
        <begin position="1592"/>
        <end position="1841"/>
    </location>
</feature>
<feature type="repeat" description="I" evidence="12">
    <location>
        <begin position="113"/>
        <end position="448"/>
    </location>
</feature>
<feature type="repeat" description="II" evidence="12">
    <location>
        <begin position="554"/>
        <end position="826"/>
    </location>
</feature>
<feature type="repeat" description="III" evidence="12">
    <location>
        <begin position="1007"/>
        <end position="1320"/>
    </location>
</feature>
<feature type="repeat" description="IV" evidence="12">
    <location>
        <begin position="1329"/>
        <end position="1627"/>
    </location>
</feature>
<feature type="domain" description="IQ" evidence="4">
    <location>
        <begin position="1721"/>
        <end position="1750"/>
    </location>
</feature>
<feature type="region of interest" description="Disordered" evidence="5">
    <location>
        <begin position="32"/>
        <end position="63"/>
    </location>
</feature>
<feature type="region of interest" description="Disordered" evidence="5">
    <location>
        <begin position="484"/>
        <end position="522"/>
    </location>
</feature>
<feature type="region of interest" description="Disordered" evidence="5">
    <location>
        <begin position="854"/>
        <end position="896"/>
    </location>
</feature>
<feature type="region of interest" description="Disordered" evidence="5">
    <location>
        <begin position="925"/>
        <end position="983"/>
    </location>
</feature>
<feature type="region of interest" description="Important for rapid channel inactivation" evidence="1">
    <location>
        <begin position="1304"/>
        <end position="1306"/>
    </location>
</feature>
<feature type="region of interest" description="Disordered" evidence="5">
    <location>
        <begin position="1776"/>
        <end position="1841"/>
    </location>
</feature>
<feature type="compositionally biased region" description="Basic and acidic residues" evidence="5">
    <location>
        <begin position="32"/>
        <end position="60"/>
    </location>
</feature>
<feature type="compositionally biased region" description="Basic and acidic residues" evidence="5">
    <location>
        <begin position="867"/>
        <end position="887"/>
    </location>
</feature>
<feature type="compositionally biased region" description="Acidic residues" evidence="5">
    <location>
        <begin position="925"/>
        <end position="941"/>
    </location>
</feature>
<feature type="compositionally biased region" description="Acidic residues" evidence="5">
    <location>
        <begin position="969"/>
        <end position="983"/>
    </location>
</feature>
<feature type="compositionally biased region" description="Basic and acidic residues" evidence="5">
    <location>
        <begin position="1776"/>
        <end position="1794"/>
    </location>
</feature>
<feature type="compositionally biased region" description="Polar residues" evidence="5">
    <location>
        <begin position="1801"/>
        <end position="1812"/>
    </location>
</feature>
<feature type="compositionally biased region" description="Pro residues" evidence="5">
    <location>
        <begin position="1814"/>
        <end position="1826"/>
    </location>
</feature>
<feature type="site" description="Important for inhibition by tetrodotoxin" evidence="1">
    <location>
        <position position="401"/>
    </location>
</feature>
<feature type="glycosylation site" description="N-linked (GlcNAc...) asparagine" evidence="3">
    <location>
        <position position="214"/>
    </location>
</feature>
<feature type="glycosylation site" description="N-linked (GlcNAc...) asparagine" evidence="3">
    <location>
        <position position="288"/>
    </location>
</feature>
<feature type="glycosylation site" description="N-linked (GlcNAc...) asparagine" evidence="3">
    <location>
        <position position="291"/>
    </location>
</feature>
<feature type="glycosylation site" description="N-linked (GlcNAc...) asparagine" evidence="3">
    <location>
        <position position="297"/>
    </location>
</feature>
<feature type="glycosylation site" description="N-linked (GlcNAc...) asparagine" evidence="3">
    <location>
        <position position="303"/>
    </location>
</feature>
<feature type="glycosylation site" description="N-linked (GlcNAc...) asparagine" evidence="3">
    <location>
        <position position="315"/>
    </location>
</feature>
<feature type="glycosylation site" description="N-linked (GlcNAc...) asparagine" evidence="3">
    <location>
        <position position="327"/>
    </location>
</feature>
<feature type="glycosylation site" description="N-linked (GlcNAc...) asparagine" evidence="3">
    <location>
        <position position="356"/>
    </location>
</feature>
<feature type="glycosylation site" description="N-linked (GlcNAc...) asparagine" evidence="3">
    <location>
        <position position="1185"/>
    </location>
</feature>
<feature type="glycosylation site" description="N-linked (GlcNAc...) asparagine" evidence="3">
    <location>
        <position position="1199"/>
    </location>
</feature>
<feature type="disulfide bond" evidence="2">
    <location>
        <begin position="280"/>
        <end position="354"/>
    </location>
</feature>
<feature type="disulfide bond" evidence="2">
    <location>
        <begin position="363"/>
        <end position="369"/>
    </location>
</feature>
<feature type="disulfide bond" evidence="2">
    <location>
        <begin position="725"/>
        <end position="731"/>
    </location>
</feature>
<feature type="disulfide bond" evidence="2">
    <location>
        <begin position="763"/>
        <end position="772"/>
    </location>
</feature>
<feature type="disulfide bond" evidence="2">
    <location>
        <begin position="1183"/>
        <end position="1203"/>
    </location>
</feature>
<feature type="disulfide bond" evidence="2">
    <location>
        <begin position="1547"/>
        <end position="1562"/>
    </location>
</feature>
<feature type="mutagenesis site" description="Homozygous mice are born at the expected Mendelian rate and have no visible phenotype. Hind-limb muscles show decreased excitability and decreased force when K(+) levels are low (in vivo). Isolated soleus muscle from homozygous mice has an increased susceptibility to loss of force generation at 2 mM K(+)." evidence="9">
    <original>R</original>
    <variation>F</variation>
    <location>
        <position position="663"/>
    </location>
</feature>
<feature type="mutagenesis site" description="A very low percentage of homozygous mice are present at 30 days after birth, suggesting high perinatal lethality. In anesthesized heterozygous mice, electromyographs from hind-limb muscle show high background activity, indicative of myotonia. Isolated extensor digitorum longus muscle from heterozygous mice displays reduced twitch force, with a normal speed of muscle contraction, but an increased muscle relaxation half-time. Isolated skeletal muscle from heterozygous mice has strongly decreased force when the K(+) levels are increased to 10 mM. Homozygous mice display prominent hind-limb weakness and muscle atrophy." evidence="7">
    <original>M</original>
    <variation>V</variation>
    <location>
        <position position="1586"/>
    </location>
</feature>
<feature type="sequence conflict" description="In Ref. 2; CAM23795." evidence="12" ref="2">
    <original>A</original>
    <variation>T</variation>
    <location>
        <position position="131"/>
    </location>
</feature>
<feature type="sequence conflict" description="In Ref. 2; CAM23795." evidence="12" ref="2">
    <original>R</original>
    <variation>Q</variation>
    <location>
        <position position="1056"/>
    </location>
</feature>
<gene>
    <name evidence="14" type="primary">Scn4a</name>
</gene>
<sequence>MASSSLPTLVPPGPHCLRPFTPESLAAIEQRAMEEEARLQRNKQMEIEEPERKPRSDLEAGKNLPLIYGDPPPEVIGVPLEDLDPYYSDKKTFIVLNKGKAIFRFSATPALYMLSPFSIVRRVAIKVLIHALFSMFIMITILTNCVFMTMSNPPSWSKDVEYTFTGIYTFESLIKMLARGFCIDDFTFLRDPWNWLDFSVITMAYVTEFVDLGNISALRTFRVLRALKTITVIPGLKTIVGALIQSVKKLSDVMILTVFCLSVFALVGLQLFMGNLRQKCVRWPPPMNDTNTTWYGNDTWYGNDTWYGNDTWYGNDTWNSQESWVSNSTFDWEAYINDEGNFYFLEGSNDALLCGNSSDAGHCPEGYECMKAGRNPNYGYTSYDTFSWAFLALFRLMTQDYWENLFQLTLRAAGKTYMIFFVVIIFLGSFYLINLILAVVAMAYAEQNEATLAEDQEKEEEFQQMLEKFKKHQEELEKAKAAQALEGGEEADGDPTHSKDCNGSLDTSGEKGPPRPSCSAESAISDAMEELEEAHQKCPPWWYKCAHKVLIWNCCAPWVKFKHIILLIVMDPFVDLGITICIVLNTLFMAMEHYPMTEHFDNVLSVGNLVFTGIFTAEMVLKLIAMDPYEYFQQGWNIFDSFIVTLSLVELGLANVQGLSVLRSFRLLRVFKLAKSWPTLNMLIKIIGNSVGALGNLTLVLAIIVFIFAVVGMQLFGKSYKECVCKIASDCSLPRWHMHDFFHSFLIVFRILCGEWIETMWDCMEVAGQAMCLTVFLMVMVIGNLVVLNLFLALLLSSFSADSLAASDEDGEMNNLQIAIGRIKWGIAFAKTFLLGLLHGKILSLKDIMLSLGEPGGAGENGESPPEDEKKEPPPEDGNKELKDNHILNHVGLTDGPRSSIEMDHLNFINNPYLTIHVPIASEESDLEMPTEEETDTFSEPEDIKKPLQPLYDGNSSVCSTADYKPPEEDPEEQAEENPEGELPEECFTEACVKRCPCLYVDISQGRGKMWWTLRRACFKIVEHNWFETFIVFMILLSSGALAFEDIYIEQRRVIRTILEYADKVFTYIFILEMLLKWVAYGFKVYFTNAWCWLDFLIVDVSIISLVANWLGYSELGPIKSLRTLRALRPLRALSRFEGMRVVVNALLGAIPSIMNVLLVCLIFWLIFSIMGVNLFAGKFYYCINTTTSERFDISVVNNKSECESLMYTGQVRWMNVKVNYDNVGLGYLSLLQVATFKGWMDIMYAAVDSREKEEQPDYEVNLYMYLYFVIFIIFGSFFTLNLFIGVIIDNFNQQKKKFGGKDIFMTEEQKKYYNAMKKLGSKKPQKPIPRPQNKIQGMVYDFVTKQVFDISIMILICLNMVTMMVETDDQSQLKVDILYNINMVFIIVFTGECVLKMFALRHYYFTIGWNIFDFVVVILSIVGLALSDLIQKYFVSPTLFRVIRLARIGRVLRLIRGAKGIRTLLFALMMSLPALFNIGLLLFLVMFIYSIFGMSNFAYVKKESGIDDMFNFETFGNSIICLFEITTSAGWDGLLNPILNSGPPDCDPTLENPGTNIKGDCGNPSIGICFFCSYIIISFLIVVNMYIAIILENFNVATEESSEPLCEDDFEMFYETWEKFDPDATQFIDYSRLSDFVDTLQEPLKIAKPNKIKLITLDLPMVPGDKIHCLDILFALTKEVLGDSGEMDALKQTMEEKFMAANPSKVSYEPITTTLKRKQEEVCAIKIQRAYRRHLLQRSVKQASYMYRHSQEGNGDGAPEKEGLLANTMNKMYGSEKEDNGVQSQGEKEKDSTEDAGPTTEVTAPSSSDTALTPPPPSPPPPSSPPQGQTVRPGVKESLV</sequence>
<keyword id="KW-1003">Cell membrane</keyword>
<keyword id="KW-1015">Disulfide bond</keyword>
<keyword id="KW-0325">Glycoprotein</keyword>
<keyword id="KW-0407">Ion channel</keyword>
<keyword id="KW-0406">Ion transport</keyword>
<keyword id="KW-0472">Membrane</keyword>
<keyword id="KW-0597">Phosphoprotein</keyword>
<keyword id="KW-1185">Reference proteome</keyword>
<keyword id="KW-0677">Repeat</keyword>
<keyword id="KW-0915">Sodium</keyword>
<keyword id="KW-0894">Sodium channel</keyword>
<keyword id="KW-0739">Sodium transport</keyword>
<keyword id="KW-0812">Transmembrane</keyword>
<keyword id="KW-1133">Transmembrane helix</keyword>
<keyword id="KW-0813">Transport</keyword>
<keyword id="KW-0851">Voltage-gated channel</keyword>
<organism>
    <name type="scientific">Mus musculus</name>
    <name type="common">Mouse</name>
    <dbReference type="NCBI Taxonomy" id="10090"/>
    <lineage>
        <taxon>Eukaryota</taxon>
        <taxon>Metazoa</taxon>
        <taxon>Chordata</taxon>
        <taxon>Craniata</taxon>
        <taxon>Vertebrata</taxon>
        <taxon>Euteleostomi</taxon>
        <taxon>Mammalia</taxon>
        <taxon>Eutheria</taxon>
        <taxon>Euarchontoglires</taxon>
        <taxon>Glires</taxon>
        <taxon>Rodentia</taxon>
        <taxon>Myomorpha</taxon>
        <taxon>Muroidea</taxon>
        <taxon>Muridae</taxon>
        <taxon>Murinae</taxon>
        <taxon>Mus</taxon>
        <taxon>Mus</taxon>
    </lineage>
</organism>
<reference key="1">
    <citation type="journal article" date="2002" name="Am. J. Physiol.">
        <title>Mouse heart Na+ channels: primary structure and function of two isoforms and alternatively spliced variants.</title>
        <authorList>
            <person name="Zimmer T."/>
            <person name="Bollensdorff C."/>
            <person name="Haufe V."/>
            <person name="Birch-Hirschfeld E."/>
            <person name="Benndorf K."/>
        </authorList>
    </citation>
    <scope>NUCLEOTIDE SEQUENCE [MRNA]</scope>
    <scope>FUNCTION</scope>
    <scope>ACTIVITY REGULATION</scope>
    <scope>SUBCELLULAR LOCATION</scope>
    <scope>TISSUE SPECIFICITY</scope>
    <source>
        <strain>BALB/cJ</strain>
        <tissue>Heart</tissue>
    </source>
</reference>
<reference key="2">
    <citation type="journal article" date="2009" name="PLoS Biol.">
        <title>Lineage-specific biology revealed by a finished genome assembly of the mouse.</title>
        <authorList>
            <person name="Church D.M."/>
            <person name="Goodstadt L."/>
            <person name="Hillier L.W."/>
            <person name="Zody M.C."/>
            <person name="Goldstein S."/>
            <person name="She X."/>
            <person name="Bult C.J."/>
            <person name="Agarwala R."/>
            <person name="Cherry J.L."/>
            <person name="DiCuccio M."/>
            <person name="Hlavina W."/>
            <person name="Kapustin Y."/>
            <person name="Meric P."/>
            <person name="Maglott D."/>
            <person name="Birtle Z."/>
            <person name="Marques A.C."/>
            <person name="Graves T."/>
            <person name="Zhou S."/>
            <person name="Teague B."/>
            <person name="Potamousis K."/>
            <person name="Churas C."/>
            <person name="Place M."/>
            <person name="Herschleb J."/>
            <person name="Runnheim R."/>
            <person name="Forrest D."/>
            <person name="Amos-Landgraf J."/>
            <person name="Schwartz D.C."/>
            <person name="Cheng Z."/>
            <person name="Lindblad-Toh K."/>
            <person name="Eichler E.E."/>
            <person name="Ponting C.P."/>
        </authorList>
    </citation>
    <scope>NUCLEOTIDE SEQUENCE [LARGE SCALE GENOMIC DNA]</scope>
    <source>
        <strain>C57BL/6J</strain>
    </source>
</reference>
<reference key="3">
    <citation type="journal article" date="2004" name="Genome Res.">
        <title>The status, quality, and expansion of the NIH full-length cDNA project: the Mammalian Gene Collection (MGC).</title>
        <authorList>
            <consortium name="The MGC Project Team"/>
        </authorList>
    </citation>
    <scope>NUCLEOTIDE SEQUENCE [LARGE SCALE MRNA] OF 2-1841</scope>
</reference>
<reference key="4">
    <citation type="journal article" date="1998" name="J. Neurosci.">
        <title>Interaction of muscle and brain sodium channels with multiple members of the syntrophin family of dystrophin-associated proteins.</title>
        <authorList>
            <person name="Gee S.H."/>
            <person name="Madhavan R."/>
            <person name="Levinson S.R."/>
            <person name="Caldwell J.H."/>
            <person name="Sealock R."/>
            <person name="Froehner S.C."/>
        </authorList>
    </citation>
    <scope>INTERACTION WITH SNTA1; SNTB1 AND SNTB2</scope>
</reference>
<reference key="5">
    <citation type="journal article" date="2008" name="J. Clin. Invest.">
        <title>Targeted mutation of mouse skeletal muscle sodium channel produces myotonia and potassium-sensitive weakness.</title>
        <authorList>
            <person name="Hayward L.J."/>
            <person name="Kim J.S."/>
            <person name="Lee M.Y."/>
            <person name="Zhou H."/>
            <person name="Kim J.W."/>
            <person name="Misra K."/>
            <person name="Salajegheh M."/>
            <person name="Wu F.F."/>
            <person name="Matsuda C."/>
            <person name="Reid V."/>
            <person name="Cros D."/>
            <person name="Hoffman E.P."/>
            <person name="Renaud J.M."/>
            <person name="Cannon S.C."/>
            <person name="Brown R.H. Jr."/>
        </authorList>
    </citation>
    <scope>FUNCTION</scope>
    <scope>MUTAGENESIS OF MET-1586</scope>
    <scope>TISSUE SPECIFICITY</scope>
</reference>
<reference key="6">
    <citation type="journal article" date="2008" name="J. Gen. Physiol.">
        <title>Nav1.4 deregulation in dystrophic skeletal muscle leads to Na+ overload and enhanced cell death.</title>
        <authorList>
            <person name="Hirn C."/>
            <person name="Shapovalov G."/>
            <person name="Petermann O."/>
            <person name="Roulet E."/>
            <person name="Ruegg U.T."/>
        </authorList>
    </citation>
    <scope>INTERACTION WITH SNTA1</scope>
</reference>
<reference key="7">
    <citation type="journal article" date="2011" name="J. Clin. Invest.">
        <title>A sodium channel knockin mutant (NaV1.4-R669H) mouse model of hypokalemic periodic paralysis.</title>
        <authorList>
            <person name="Wu F."/>
            <person name="Mi W."/>
            <person name="Burns D.K."/>
            <person name="Fu Y."/>
            <person name="Gray H.F."/>
            <person name="Struyk A.F."/>
            <person name="Cannon S.C."/>
        </authorList>
    </citation>
    <scope>FUNCTION</scope>
    <scope>MUTAGENESIS OF ARG-663</scope>
</reference>
<reference key="8">
    <citation type="journal article" date="2015" name="Hum. Mol. Genet.">
        <title>SCN4A pore mutation pathogenetically contributes to autosomal dominant essential tremor and may increase susceptibility to epilepsy.</title>
        <authorList>
            <person name="Bergareche A."/>
            <person name="Bednarz M."/>
            <person name="Sanchez E."/>
            <person name="Krebs C.E."/>
            <person name="Ruiz-Martinez J."/>
            <person name="De La Riva P."/>
            <person name="Makarov V."/>
            <person name="Gorostidi A."/>
            <person name="Jurkat-Rott K."/>
            <person name="Marti-Masso J.F."/>
            <person name="Paisan-Ruiz C."/>
        </authorList>
    </citation>
    <scope>TISSUE SPECIFICITY</scope>
</reference>
<dbReference type="EMBL" id="AJ278787">
    <property type="protein sequence ID" value="CAC17146.1"/>
    <property type="molecule type" value="mRNA"/>
</dbReference>
<dbReference type="EMBL" id="AL604045">
    <property type="protein sequence ID" value="CAM23795.1"/>
    <property type="molecule type" value="Genomic_DNA"/>
</dbReference>
<dbReference type="EMBL" id="BC129805">
    <property type="protein sequence ID" value="AAI29806.1"/>
    <property type="molecule type" value="mRNA"/>
</dbReference>
<dbReference type="CCDS" id="CCDS48961.1"/>
<dbReference type="RefSeq" id="NP_573462.2">
    <property type="nucleotide sequence ID" value="NM_133199.2"/>
</dbReference>
<dbReference type="SMR" id="Q9ER60"/>
<dbReference type="FunCoup" id="Q9ER60">
    <property type="interactions" value="165"/>
</dbReference>
<dbReference type="STRING" id="10090.ENSMUSP00000021056"/>
<dbReference type="BindingDB" id="Q9ER60"/>
<dbReference type="ChEMBL" id="CHEMBL3616353"/>
<dbReference type="GlyCosmos" id="Q9ER60">
    <property type="glycosylation" value="10 sites, No reported glycans"/>
</dbReference>
<dbReference type="GlyGen" id="Q9ER60">
    <property type="glycosylation" value="12 sites"/>
</dbReference>
<dbReference type="iPTMnet" id="Q9ER60"/>
<dbReference type="PhosphoSitePlus" id="Q9ER60"/>
<dbReference type="PaxDb" id="10090-ENSMUSP00000021056"/>
<dbReference type="ProteomicsDB" id="253413"/>
<dbReference type="DNASU" id="110880"/>
<dbReference type="GeneID" id="110880"/>
<dbReference type="KEGG" id="mmu:110880"/>
<dbReference type="AGR" id="MGI:98250"/>
<dbReference type="CTD" id="6329"/>
<dbReference type="MGI" id="MGI:98250">
    <property type="gene designation" value="Scn4a"/>
</dbReference>
<dbReference type="eggNOG" id="KOG2301">
    <property type="taxonomic scope" value="Eukaryota"/>
</dbReference>
<dbReference type="InParanoid" id="Q9ER60"/>
<dbReference type="OrthoDB" id="2984333at2759"/>
<dbReference type="PhylomeDB" id="Q9ER60"/>
<dbReference type="BioGRID-ORCS" id="110880">
    <property type="hits" value="2 hits in 77 CRISPR screens"/>
</dbReference>
<dbReference type="PRO" id="PR:Q9ER60"/>
<dbReference type="Proteomes" id="UP000000589">
    <property type="component" value="Unplaced"/>
</dbReference>
<dbReference type="RNAct" id="Q9ER60">
    <property type="molecule type" value="protein"/>
</dbReference>
<dbReference type="GO" id="GO:0005886">
    <property type="term" value="C:plasma membrane"/>
    <property type="evidence" value="ECO:0000250"/>
    <property type="project" value="UniProtKB"/>
</dbReference>
<dbReference type="GO" id="GO:0001518">
    <property type="term" value="C:voltage-gated sodium channel complex"/>
    <property type="evidence" value="ECO:0000250"/>
    <property type="project" value="UniProtKB"/>
</dbReference>
<dbReference type="GO" id="GO:0005248">
    <property type="term" value="F:voltage-gated sodium channel activity"/>
    <property type="evidence" value="ECO:0000314"/>
    <property type="project" value="MGI"/>
</dbReference>
<dbReference type="GO" id="GO:0100001">
    <property type="term" value="P:regulation of skeletal muscle contraction by action potential"/>
    <property type="evidence" value="ECO:0000250"/>
    <property type="project" value="UniProtKB"/>
</dbReference>
<dbReference type="GO" id="GO:0006814">
    <property type="term" value="P:sodium ion transport"/>
    <property type="evidence" value="ECO:0000314"/>
    <property type="project" value="MGI"/>
</dbReference>
<dbReference type="CDD" id="cd13433">
    <property type="entry name" value="Na_channel_gate"/>
    <property type="match status" value="1"/>
</dbReference>
<dbReference type="FunFam" id="1.10.238.10:FF:000002">
    <property type="entry name" value="Sodium channel protein"/>
    <property type="match status" value="1"/>
</dbReference>
<dbReference type="FunFam" id="1.10.287.70:FF:000001">
    <property type="entry name" value="Sodium channel protein"/>
    <property type="match status" value="1"/>
</dbReference>
<dbReference type="FunFam" id="1.10.287.70:FF:000006">
    <property type="entry name" value="Sodium channel protein"/>
    <property type="match status" value="1"/>
</dbReference>
<dbReference type="FunFam" id="1.20.120.350:FF:000002">
    <property type="entry name" value="Sodium channel protein"/>
    <property type="match status" value="1"/>
</dbReference>
<dbReference type="FunFam" id="1.20.120.350:FF:000004">
    <property type="entry name" value="Sodium channel protein"/>
    <property type="match status" value="1"/>
</dbReference>
<dbReference type="FunFam" id="1.20.120.350:FF:000005">
    <property type="entry name" value="Sodium channel protein"/>
    <property type="match status" value="1"/>
</dbReference>
<dbReference type="FunFam" id="1.20.5.1190:FF:000001">
    <property type="entry name" value="Sodium channel protein"/>
    <property type="match status" value="1"/>
</dbReference>
<dbReference type="FunFam" id="1.20.120.350:FF:000003">
    <property type="entry name" value="Voltage-dependent sodium channel"/>
    <property type="match status" value="1"/>
</dbReference>
<dbReference type="Gene3D" id="1.10.287.70">
    <property type="match status" value="4"/>
</dbReference>
<dbReference type="Gene3D" id="1.10.238.10">
    <property type="entry name" value="EF-hand"/>
    <property type="match status" value="1"/>
</dbReference>
<dbReference type="Gene3D" id="1.20.5.1190">
    <property type="entry name" value="iswi atpase"/>
    <property type="match status" value="1"/>
</dbReference>
<dbReference type="Gene3D" id="1.20.120.350">
    <property type="entry name" value="Voltage-gated potassium channels. Chain C"/>
    <property type="match status" value="4"/>
</dbReference>
<dbReference type="InterPro" id="IPR005821">
    <property type="entry name" value="Ion_trans_dom"/>
</dbReference>
<dbReference type="InterPro" id="IPR008052">
    <property type="entry name" value="Na_channel_a4su_mammal"/>
</dbReference>
<dbReference type="InterPro" id="IPR001696">
    <property type="entry name" value="Na_channel_asu"/>
</dbReference>
<dbReference type="InterPro" id="IPR044564">
    <property type="entry name" value="Na_chnl_inactivation_gate"/>
</dbReference>
<dbReference type="InterPro" id="IPR010526">
    <property type="entry name" value="Na_trans_assoc_dom"/>
</dbReference>
<dbReference type="InterPro" id="IPR043203">
    <property type="entry name" value="VGCC_Ca_Na"/>
</dbReference>
<dbReference type="InterPro" id="IPR027359">
    <property type="entry name" value="Volt_channel_dom_sf"/>
</dbReference>
<dbReference type="PANTHER" id="PTHR10037:SF223">
    <property type="entry name" value="SODIUM CHANNEL PROTEIN TYPE 4 SUBUNIT ALPHA"/>
    <property type="match status" value="1"/>
</dbReference>
<dbReference type="PANTHER" id="PTHR10037">
    <property type="entry name" value="VOLTAGE-GATED CATION CHANNEL CALCIUM AND SODIUM"/>
    <property type="match status" value="1"/>
</dbReference>
<dbReference type="Pfam" id="PF00520">
    <property type="entry name" value="Ion_trans"/>
    <property type="match status" value="4"/>
</dbReference>
<dbReference type="Pfam" id="PF24609">
    <property type="entry name" value="IQ_SCN5A_C"/>
    <property type="match status" value="1"/>
</dbReference>
<dbReference type="Pfam" id="PF06512">
    <property type="entry name" value="Na_trans_assoc"/>
    <property type="match status" value="1"/>
</dbReference>
<dbReference type="PRINTS" id="PR00170">
    <property type="entry name" value="NACHANNEL"/>
</dbReference>
<dbReference type="PRINTS" id="PR01665">
    <property type="entry name" value="NACHANNEL4"/>
</dbReference>
<dbReference type="SUPFAM" id="SSF81324">
    <property type="entry name" value="Voltage-gated potassium channels"/>
    <property type="match status" value="4"/>
</dbReference>
<dbReference type="PROSITE" id="PS50096">
    <property type="entry name" value="IQ"/>
    <property type="match status" value="1"/>
</dbReference>
<comment type="function">
    <text evidence="6 7 9">Pore-forming subunit of Nav1.4, a voltage-gated sodium (Nav) channel that directly mediates the depolarizing phase of action potentials in excitable membranes. Navs, also called VGSCs (voltage-gated sodium channels) or VDSCs (voltage-dependent sodium channels), operate by switching between closed and open conformations depending on the voltage difference across the membrane. In the open conformation they allow Na(+) ions to selectively pass through the pore, along their electrochemical gradient. The influx of Na+ ions provokes membrane depolarization, initiating the propagation of electrical signals throughout cells and tissues (PubMed:11834499). Highly expressed in skeletal muscles, Nav1.4 generates the action potential crucial for muscle contraction (PubMed:18317596, PubMed:21881211).</text>
</comment>
<comment type="catalytic activity">
    <reaction evidence="2">
        <text>Na(+)(in) = Na(+)(out)</text>
        <dbReference type="Rhea" id="RHEA:34963"/>
        <dbReference type="ChEBI" id="CHEBI:29101"/>
    </reaction>
</comment>
<comment type="activity regulation">
    <text evidence="6">The channel is inhibited by tetrodotoxin.</text>
</comment>
<comment type="subunit">
    <text evidence="2 8 11">The Nav1.4 voltage-gated sodium channel consists of an ion-conducting alpha subunit SCN4A which is functional on its own and a regulatory beta subunit SCN1B (By similarity). SCN1B strongly enhances the presence of SCN4A at the cell surface (By similarity). SCN1B is also required for rapid channel inactivation and recovery after inactivation. It prevents the decrease of channel activity in response to repetitive, high-frequency depolarizations (By similarity). Interacts with the syntrophins SNTA1, SNTB1 and SNTB2 (via PDZ domain); probably links SCN4A to the actin cytoskeleton and the extracellular matrix via the dystrophin-associated protein complex and regulates its localization in muscle cells (PubMed:18625851, PubMed:9412493). Interacts with TMEM233; probable regulator of the channel (By similarity).</text>
</comment>
<comment type="subcellular location">
    <subcellularLocation>
        <location evidence="6">Cell membrane</location>
        <topology evidence="2">Multi-pass membrane protein</topology>
    </subcellularLocation>
</comment>
<comment type="tissue specificity">
    <text evidence="6 7 10">Detected in quadriceps muscle (at protein level) (PubMed:18317596). Detected in hind-limb skeletal muscles, but not in heart or brain (PubMed:18317596). Detected at low levels in the myocardium. According to Pubme=26427606 detected also in brain.</text>
</comment>
<comment type="domain">
    <text evidence="2">The sequence contains 4 internal repeats, each with 5 hydrophobic segments (S1, S2, S3, S5, S6) and one positively charged segment (S4). Segments S4 are probably the voltage-sensors and are characterized by a series of positively charged amino acids at every third position.</text>
</comment>
<comment type="similarity">
    <text evidence="12">Belongs to the sodium channel (TC 1.A.1.10) family. Nav1.4/SCN4A subfamily.</text>
</comment>
<evidence type="ECO:0000250" key="1">
    <source>
        <dbReference type="UniProtKB" id="P15390"/>
    </source>
</evidence>
<evidence type="ECO:0000250" key="2">
    <source>
        <dbReference type="UniProtKB" id="P35499"/>
    </source>
</evidence>
<evidence type="ECO:0000255" key="3"/>
<evidence type="ECO:0000255" key="4">
    <source>
        <dbReference type="PROSITE-ProRule" id="PRU00116"/>
    </source>
</evidence>
<evidence type="ECO:0000256" key="5">
    <source>
        <dbReference type="SAM" id="MobiDB-lite"/>
    </source>
</evidence>
<evidence type="ECO:0000269" key="6">
    <source>
    </source>
</evidence>
<evidence type="ECO:0000269" key="7">
    <source>
    </source>
</evidence>
<evidence type="ECO:0000269" key="8">
    <source>
    </source>
</evidence>
<evidence type="ECO:0000269" key="9">
    <source>
    </source>
</evidence>
<evidence type="ECO:0000269" key="10">
    <source>
    </source>
</evidence>
<evidence type="ECO:0000269" key="11">
    <source>
    </source>
</evidence>
<evidence type="ECO:0000305" key="12"/>
<evidence type="ECO:0000305" key="13">
    <source>
    </source>
</evidence>
<evidence type="ECO:0000312" key="14">
    <source>
        <dbReference type="MGI" id="MGI:98250"/>
    </source>
</evidence>
<proteinExistence type="evidence at protein level"/>
<name>SCN4A_MOUSE</name>
<accession>Q9ER60</accession>
<accession>A2VDE9</accession>
<accession>B1ARK0</accession>